<accession>Q62LS6</accession>
<reference key="1">
    <citation type="journal article" date="2004" name="Proc. Natl. Acad. Sci. U.S.A.">
        <title>Structural flexibility in the Burkholderia mallei genome.</title>
        <authorList>
            <person name="Nierman W.C."/>
            <person name="DeShazer D."/>
            <person name="Kim H.S."/>
            <person name="Tettelin H."/>
            <person name="Nelson K.E."/>
            <person name="Feldblyum T.V."/>
            <person name="Ulrich R.L."/>
            <person name="Ronning C.M."/>
            <person name="Brinkac L.M."/>
            <person name="Daugherty S.C."/>
            <person name="Davidsen T.D."/>
            <person name="DeBoy R.T."/>
            <person name="Dimitrov G."/>
            <person name="Dodson R.J."/>
            <person name="Durkin A.S."/>
            <person name="Gwinn M.L."/>
            <person name="Haft D.H."/>
            <person name="Khouri H.M."/>
            <person name="Kolonay J.F."/>
            <person name="Madupu R."/>
            <person name="Mohammoud Y."/>
            <person name="Nelson W.C."/>
            <person name="Radune D."/>
            <person name="Romero C.M."/>
            <person name="Sarria S."/>
            <person name="Selengut J."/>
            <person name="Shamblin C."/>
            <person name="Sullivan S.A."/>
            <person name="White O."/>
            <person name="Yu Y."/>
            <person name="Zafar N."/>
            <person name="Zhou L."/>
            <person name="Fraser C.M."/>
        </authorList>
    </citation>
    <scope>NUCLEOTIDE SEQUENCE [LARGE SCALE GENOMIC DNA]</scope>
    <source>
        <strain>ATCC 23344</strain>
    </source>
</reference>
<organism>
    <name type="scientific">Burkholderia mallei (strain ATCC 23344)</name>
    <dbReference type="NCBI Taxonomy" id="243160"/>
    <lineage>
        <taxon>Bacteria</taxon>
        <taxon>Pseudomonadati</taxon>
        <taxon>Pseudomonadota</taxon>
        <taxon>Betaproteobacteria</taxon>
        <taxon>Burkholderiales</taxon>
        <taxon>Burkholderiaceae</taxon>
        <taxon>Burkholderia</taxon>
        <taxon>pseudomallei group</taxon>
    </lineage>
</organism>
<gene>
    <name evidence="1" type="primary">acpS</name>
    <name type="ordered locus">BMA0547</name>
</gene>
<dbReference type="EC" id="2.7.8.7" evidence="1"/>
<dbReference type="EMBL" id="CP000010">
    <property type="protein sequence ID" value="AAU49363.1"/>
    <property type="molecule type" value="Genomic_DNA"/>
</dbReference>
<dbReference type="RefSeq" id="WP_004191194.1">
    <property type="nucleotide sequence ID" value="NC_006348.1"/>
</dbReference>
<dbReference type="RefSeq" id="YP_102343.1">
    <property type="nucleotide sequence ID" value="NC_006348.1"/>
</dbReference>
<dbReference type="SMR" id="Q62LS6"/>
<dbReference type="GeneID" id="93061005"/>
<dbReference type="KEGG" id="bma:BMA0547"/>
<dbReference type="PATRIC" id="fig|243160.12.peg.561"/>
<dbReference type="eggNOG" id="COG0736">
    <property type="taxonomic scope" value="Bacteria"/>
</dbReference>
<dbReference type="HOGENOM" id="CLU_089696_3_1_4"/>
<dbReference type="Proteomes" id="UP000006693">
    <property type="component" value="Chromosome 1"/>
</dbReference>
<dbReference type="GO" id="GO:0005737">
    <property type="term" value="C:cytoplasm"/>
    <property type="evidence" value="ECO:0007669"/>
    <property type="project" value="UniProtKB-SubCell"/>
</dbReference>
<dbReference type="GO" id="GO:0008897">
    <property type="term" value="F:holo-[acyl-carrier-protein] synthase activity"/>
    <property type="evidence" value="ECO:0007669"/>
    <property type="project" value="UniProtKB-UniRule"/>
</dbReference>
<dbReference type="GO" id="GO:0000287">
    <property type="term" value="F:magnesium ion binding"/>
    <property type="evidence" value="ECO:0007669"/>
    <property type="project" value="UniProtKB-UniRule"/>
</dbReference>
<dbReference type="GO" id="GO:0006633">
    <property type="term" value="P:fatty acid biosynthetic process"/>
    <property type="evidence" value="ECO:0007669"/>
    <property type="project" value="UniProtKB-UniRule"/>
</dbReference>
<dbReference type="Gene3D" id="3.90.470.20">
    <property type="entry name" value="4'-phosphopantetheinyl transferase domain"/>
    <property type="match status" value="1"/>
</dbReference>
<dbReference type="HAMAP" id="MF_00101">
    <property type="entry name" value="AcpS"/>
    <property type="match status" value="1"/>
</dbReference>
<dbReference type="InterPro" id="IPR008278">
    <property type="entry name" value="4-PPantetheinyl_Trfase_dom"/>
</dbReference>
<dbReference type="InterPro" id="IPR037143">
    <property type="entry name" value="4-PPantetheinyl_Trfase_dom_sf"/>
</dbReference>
<dbReference type="InterPro" id="IPR002582">
    <property type="entry name" value="ACPS"/>
</dbReference>
<dbReference type="InterPro" id="IPR004568">
    <property type="entry name" value="Ppantetheine-prot_Trfase_dom"/>
</dbReference>
<dbReference type="NCBIfam" id="TIGR00516">
    <property type="entry name" value="acpS"/>
    <property type="match status" value="1"/>
</dbReference>
<dbReference type="NCBIfam" id="TIGR00556">
    <property type="entry name" value="pantethn_trn"/>
    <property type="match status" value="1"/>
</dbReference>
<dbReference type="Pfam" id="PF01648">
    <property type="entry name" value="ACPS"/>
    <property type="match status" value="1"/>
</dbReference>
<dbReference type="SUPFAM" id="SSF56214">
    <property type="entry name" value="4'-phosphopantetheinyl transferase"/>
    <property type="match status" value="1"/>
</dbReference>
<sequence length="143" mass="15364">MAIYGIGTDLAQVSRIAAVLERTGGRFAEKVLGPDELRVFHARRARSEARGIAFLATRFSAKEAFSKAIGLGMHWPMTWRALQTLNRPSGEPYVVASGELAAWLDARGITARVTVSDERDYAVTFVVAEAPDDVAAARSGAAS</sequence>
<feature type="chain" id="PRO_0000175624" description="Holo-[acyl-carrier-protein] synthase">
    <location>
        <begin position="1"/>
        <end position="143"/>
    </location>
</feature>
<feature type="binding site" evidence="1">
    <location>
        <position position="9"/>
    </location>
    <ligand>
        <name>Mg(2+)</name>
        <dbReference type="ChEBI" id="CHEBI:18420"/>
    </ligand>
</feature>
<feature type="binding site" evidence="1">
    <location>
        <position position="63"/>
    </location>
    <ligand>
        <name>Mg(2+)</name>
        <dbReference type="ChEBI" id="CHEBI:18420"/>
    </ligand>
</feature>
<comment type="function">
    <text evidence="1">Transfers the 4'-phosphopantetheine moiety from coenzyme A to a Ser of acyl-carrier-protein.</text>
</comment>
<comment type="catalytic activity">
    <reaction evidence="1">
        <text>apo-[ACP] + CoA = holo-[ACP] + adenosine 3',5'-bisphosphate + H(+)</text>
        <dbReference type="Rhea" id="RHEA:12068"/>
        <dbReference type="Rhea" id="RHEA-COMP:9685"/>
        <dbReference type="Rhea" id="RHEA-COMP:9690"/>
        <dbReference type="ChEBI" id="CHEBI:15378"/>
        <dbReference type="ChEBI" id="CHEBI:29999"/>
        <dbReference type="ChEBI" id="CHEBI:57287"/>
        <dbReference type="ChEBI" id="CHEBI:58343"/>
        <dbReference type="ChEBI" id="CHEBI:64479"/>
        <dbReference type="EC" id="2.7.8.7"/>
    </reaction>
</comment>
<comment type="cofactor">
    <cofactor evidence="1">
        <name>Mg(2+)</name>
        <dbReference type="ChEBI" id="CHEBI:18420"/>
    </cofactor>
</comment>
<comment type="subcellular location">
    <subcellularLocation>
        <location evidence="1">Cytoplasm</location>
    </subcellularLocation>
</comment>
<comment type="similarity">
    <text evidence="1">Belongs to the P-Pant transferase superfamily. AcpS family.</text>
</comment>
<protein>
    <recommendedName>
        <fullName evidence="1">Holo-[acyl-carrier-protein] synthase</fullName>
        <shortName evidence="1">Holo-ACP synthase</shortName>
        <ecNumber evidence="1">2.7.8.7</ecNumber>
    </recommendedName>
    <alternativeName>
        <fullName evidence="1">4'-phosphopantetheinyl transferase AcpS</fullName>
    </alternativeName>
</protein>
<evidence type="ECO:0000255" key="1">
    <source>
        <dbReference type="HAMAP-Rule" id="MF_00101"/>
    </source>
</evidence>
<proteinExistence type="inferred from homology"/>
<name>ACPS_BURMA</name>
<keyword id="KW-0963">Cytoplasm</keyword>
<keyword id="KW-0275">Fatty acid biosynthesis</keyword>
<keyword id="KW-0276">Fatty acid metabolism</keyword>
<keyword id="KW-0444">Lipid biosynthesis</keyword>
<keyword id="KW-0443">Lipid metabolism</keyword>
<keyword id="KW-0460">Magnesium</keyword>
<keyword id="KW-0479">Metal-binding</keyword>
<keyword id="KW-1185">Reference proteome</keyword>
<keyword id="KW-0808">Transferase</keyword>